<feature type="chain" id="PRO_0000090219" description="Triosephosphate isomerase">
    <location>
        <begin position="1"/>
        <end position="255"/>
    </location>
</feature>
<feature type="active site" description="Electrophile" evidence="1">
    <location>
        <position position="95"/>
    </location>
</feature>
<feature type="active site" description="Proton acceptor" evidence="1">
    <location>
        <position position="167"/>
    </location>
</feature>
<feature type="binding site" evidence="1">
    <location>
        <begin position="9"/>
        <end position="11"/>
    </location>
    <ligand>
        <name>substrate</name>
    </ligand>
</feature>
<feature type="binding site" evidence="1">
    <location>
        <position position="173"/>
    </location>
    <ligand>
        <name>substrate</name>
    </ligand>
</feature>
<feature type="binding site" evidence="1">
    <location>
        <position position="212"/>
    </location>
    <ligand>
        <name>substrate</name>
    </ligand>
</feature>
<feature type="binding site" evidence="1">
    <location>
        <begin position="233"/>
        <end position="234"/>
    </location>
    <ligand>
        <name>substrate</name>
    </ligand>
</feature>
<comment type="function">
    <text evidence="1">Involved in the gluconeogenesis. Catalyzes stereospecifically the conversion of dihydroxyacetone phosphate (DHAP) to D-glyceraldehyde-3-phosphate (G3P).</text>
</comment>
<comment type="catalytic activity">
    <reaction evidence="1">
        <text>D-glyceraldehyde 3-phosphate = dihydroxyacetone phosphate</text>
        <dbReference type="Rhea" id="RHEA:18585"/>
        <dbReference type="ChEBI" id="CHEBI:57642"/>
        <dbReference type="ChEBI" id="CHEBI:59776"/>
        <dbReference type="EC" id="5.3.1.1"/>
    </reaction>
</comment>
<comment type="pathway">
    <text evidence="1">Carbohydrate biosynthesis; gluconeogenesis.</text>
</comment>
<comment type="pathway">
    <text evidence="1">Carbohydrate degradation; glycolysis; D-glyceraldehyde 3-phosphate from glycerone phosphate: step 1/1.</text>
</comment>
<comment type="subunit">
    <text evidence="1">Homodimer.</text>
</comment>
<comment type="subcellular location">
    <subcellularLocation>
        <location evidence="1">Cytoplasm</location>
    </subcellularLocation>
</comment>
<comment type="similarity">
    <text evidence="1">Belongs to the triosephosphate isomerase family.</text>
</comment>
<protein>
    <recommendedName>
        <fullName evidence="1">Triosephosphate isomerase</fullName>
        <shortName evidence="1">TIM</shortName>
        <shortName evidence="1">TPI</shortName>
        <ecNumber evidence="1">5.3.1.1</ecNumber>
    </recommendedName>
    <alternativeName>
        <fullName evidence="1">Triose-phosphate isomerase</fullName>
    </alternativeName>
</protein>
<evidence type="ECO:0000255" key="1">
    <source>
        <dbReference type="HAMAP-Rule" id="MF_00147"/>
    </source>
</evidence>
<dbReference type="EC" id="5.3.1.1" evidence="1"/>
<dbReference type="EMBL" id="AE014075">
    <property type="protein sequence ID" value="AAN83299.1"/>
    <property type="molecule type" value="Genomic_DNA"/>
</dbReference>
<dbReference type="RefSeq" id="WP_001216325.1">
    <property type="nucleotide sequence ID" value="NZ_CP051263.1"/>
</dbReference>
<dbReference type="SMR" id="P0A859"/>
<dbReference type="STRING" id="199310.c4871"/>
<dbReference type="GeneID" id="93777979"/>
<dbReference type="KEGG" id="ecc:c4871"/>
<dbReference type="eggNOG" id="COG0149">
    <property type="taxonomic scope" value="Bacteria"/>
</dbReference>
<dbReference type="HOGENOM" id="CLU_024251_2_1_6"/>
<dbReference type="BioCyc" id="ECOL199310:C4871-MONOMER"/>
<dbReference type="UniPathway" id="UPA00109">
    <property type="reaction ID" value="UER00189"/>
</dbReference>
<dbReference type="UniPathway" id="UPA00138"/>
<dbReference type="Proteomes" id="UP000001410">
    <property type="component" value="Chromosome"/>
</dbReference>
<dbReference type="GO" id="GO:0005829">
    <property type="term" value="C:cytosol"/>
    <property type="evidence" value="ECO:0007669"/>
    <property type="project" value="TreeGrafter"/>
</dbReference>
<dbReference type="GO" id="GO:0004807">
    <property type="term" value="F:triose-phosphate isomerase activity"/>
    <property type="evidence" value="ECO:0007669"/>
    <property type="project" value="UniProtKB-UniRule"/>
</dbReference>
<dbReference type="GO" id="GO:0006094">
    <property type="term" value="P:gluconeogenesis"/>
    <property type="evidence" value="ECO:0007669"/>
    <property type="project" value="UniProtKB-UniRule"/>
</dbReference>
<dbReference type="GO" id="GO:0046166">
    <property type="term" value="P:glyceraldehyde-3-phosphate biosynthetic process"/>
    <property type="evidence" value="ECO:0007669"/>
    <property type="project" value="TreeGrafter"/>
</dbReference>
<dbReference type="GO" id="GO:0019563">
    <property type="term" value="P:glycerol catabolic process"/>
    <property type="evidence" value="ECO:0007669"/>
    <property type="project" value="TreeGrafter"/>
</dbReference>
<dbReference type="GO" id="GO:0006096">
    <property type="term" value="P:glycolytic process"/>
    <property type="evidence" value="ECO:0007669"/>
    <property type="project" value="UniProtKB-UniRule"/>
</dbReference>
<dbReference type="CDD" id="cd00311">
    <property type="entry name" value="TIM"/>
    <property type="match status" value="1"/>
</dbReference>
<dbReference type="FunFam" id="3.20.20.70:FF:000020">
    <property type="entry name" value="Triosephosphate isomerase"/>
    <property type="match status" value="1"/>
</dbReference>
<dbReference type="Gene3D" id="3.20.20.70">
    <property type="entry name" value="Aldolase class I"/>
    <property type="match status" value="1"/>
</dbReference>
<dbReference type="HAMAP" id="MF_00147_B">
    <property type="entry name" value="TIM_B"/>
    <property type="match status" value="1"/>
</dbReference>
<dbReference type="InterPro" id="IPR013785">
    <property type="entry name" value="Aldolase_TIM"/>
</dbReference>
<dbReference type="InterPro" id="IPR035990">
    <property type="entry name" value="TIM_sf"/>
</dbReference>
<dbReference type="InterPro" id="IPR022896">
    <property type="entry name" value="TrioseP_Isoase_bac/euk"/>
</dbReference>
<dbReference type="InterPro" id="IPR000652">
    <property type="entry name" value="Triosephosphate_isomerase"/>
</dbReference>
<dbReference type="InterPro" id="IPR020861">
    <property type="entry name" value="Triosephosphate_isomerase_AS"/>
</dbReference>
<dbReference type="NCBIfam" id="TIGR00419">
    <property type="entry name" value="tim"/>
    <property type="match status" value="1"/>
</dbReference>
<dbReference type="PANTHER" id="PTHR21139">
    <property type="entry name" value="TRIOSEPHOSPHATE ISOMERASE"/>
    <property type="match status" value="1"/>
</dbReference>
<dbReference type="PANTHER" id="PTHR21139:SF42">
    <property type="entry name" value="TRIOSEPHOSPHATE ISOMERASE"/>
    <property type="match status" value="1"/>
</dbReference>
<dbReference type="Pfam" id="PF00121">
    <property type="entry name" value="TIM"/>
    <property type="match status" value="1"/>
</dbReference>
<dbReference type="SUPFAM" id="SSF51351">
    <property type="entry name" value="Triosephosphate isomerase (TIM)"/>
    <property type="match status" value="1"/>
</dbReference>
<dbReference type="PROSITE" id="PS00171">
    <property type="entry name" value="TIM_1"/>
    <property type="match status" value="1"/>
</dbReference>
<dbReference type="PROSITE" id="PS51440">
    <property type="entry name" value="TIM_2"/>
    <property type="match status" value="1"/>
</dbReference>
<sequence length="255" mass="26972">MRHPLVMGNWKLNGSRHMVHELVSNLRKELAGVAGCAVAIAPPEMYIDMAKREAEGSHIMLGAQNVDLNLSGAFTGETSAAMLKDIGAQYIIIGHSERRTYHKESDELIAKKFAVLKEQGLTPVLCIGETEAENEAGKTEEVCARQIDAVLKTQGAAAFEGAVIAYEPVWAIGTGKSATPAQAQAVHKFIRDHIAKVDANIAEQVIIQYGGSVNASNAAELFAQPDIDGALVGGASLKADAFAVIVKAAEAAKQA</sequence>
<reference key="1">
    <citation type="journal article" date="2002" name="Proc. Natl. Acad. Sci. U.S.A.">
        <title>Extensive mosaic structure revealed by the complete genome sequence of uropathogenic Escherichia coli.</title>
        <authorList>
            <person name="Welch R.A."/>
            <person name="Burland V."/>
            <person name="Plunkett G. III"/>
            <person name="Redford P."/>
            <person name="Roesch P."/>
            <person name="Rasko D."/>
            <person name="Buckles E.L."/>
            <person name="Liou S.-R."/>
            <person name="Boutin A."/>
            <person name="Hackett J."/>
            <person name="Stroud D."/>
            <person name="Mayhew G.F."/>
            <person name="Rose D.J."/>
            <person name="Zhou S."/>
            <person name="Schwartz D.C."/>
            <person name="Perna N.T."/>
            <person name="Mobley H.L.T."/>
            <person name="Donnenberg M.S."/>
            <person name="Blattner F.R."/>
        </authorList>
    </citation>
    <scope>NUCLEOTIDE SEQUENCE [LARGE SCALE GENOMIC DNA]</scope>
    <source>
        <strain>CFT073 / ATCC 700928 / UPEC</strain>
    </source>
</reference>
<proteinExistence type="inferred from homology"/>
<accession>P0A859</accession>
<accession>P04790</accession>
<gene>
    <name evidence="1" type="primary">tpiA</name>
    <name type="synonym">tpi</name>
    <name type="ordered locus">c4871</name>
</gene>
<keyword id="KW-0963">Cytoplasm</keyword>
<keyword id="KW-0312">Gluconeogenesis</keyword>
<keyword id="KW-0324">Glycolysis</keyword>
<keyword id="KW-0413">Isomerase</keyword>
<keyword id="KW-1185">Reference proteome</keyword>
<organism>
    <name type="scientific">Escherichia coli O6:H1 (strain CFT073 / ATCC 700928 / UPEC)</name>
    <dbReference type="NCBI Taxonomy" id="199310"/>
    <lineage>
        <taxon>Bacteria</taxon>
        <taxon>Pseudomonadati</taxon>
        <taxon>Pseudomonadota</taxon>
        <taxon>Gammaproteobacteria</taxon>
        <taxon>Enterobacterales</taxon>
        <taxon>Enterobacteriaceae</taxon>
        <taxon>Escherichia</taxon>
    </lineage>
</organism>
<name>TPIS_ECOL6</name>